<comment type="function">
    <text evidence="3">Scaffolding protein that functions as part of a dystroglycan complex in Schwann cells, and as part of EZR and AHNAK-containing complexes in eye lens fiber cells. Required for the maintenance of the peripheral myelin sheath that is essential for normal transmission of nerve impulses and normal perception of sensory stimuli. Required for normal transport of MBP mRNA from the perinuclear to the paranodal regions. Required for normal remyelination after nerve injury. Required for normal elongation of Schwann cells and normal length of the internodes between the nodes of Ranvier. The demyelinated nodes of Ranvier permit saltatory transmission of nerve impulses; shorter internodes cause slower transmission of nerve impulses. Required for the formation of appositions between the abaxonal surface of the myelin sheath and the Schwann cell plasma membrane; the Schwann cell cytoplasm is restricted to regions between these appositions. Required for the formation of Cajal bands and of Schmidt-Lanterman incisures that correspond to short, cytoplasm-filled regions on myelinated nerves. Recruits DRP2 to the Schwann cell plasma membrane. Required for normal protein composition of the eye lens fiber cell plasma membrane and normal eye lens fiber cell morphology.</text>
</comment>
<comment type="subunit">
    <text evidence="2 3 4 14">Homodimer (via PDZ domain) (PubMed:24675079). Interacts with SCN10A. Found in a complex with SCN10A (By similarity). Interacts with DRP2. Identified in a dystroglycan complex that contains at least PRX, DRP2, UTRN, DMD and DAG1 (By similarity). Detected in a complex composed of at least EZR, AHNAK, PPL and PRX (By similarity). Identified in a complex with EZR, AHNAK, BFSP1, BFSP2, ANK2, PLEC, VIM and spectrin (By similarity).</text>
</comment>
<comment type="interaction">
    <interactant intactId="EBI-1753064">
        <id>Q9BXM0</id>
    </interactant>
    <interactant intactId="EBI-389883">
        <id>P16333</id>
        <label>NCK1</label>
    </interactant>
    <organismsDiffer>false</organismsDiffer>
    <experiments>2</experiments>
</comment>
<comment type="interaction">
    <interactant intactId="EBI-1753064">
        <id>Q9BXM0</id>
    </interactant>
    <interactant intactId="EBI-750109">
        <id>Q9NYB0</id>
        <label>TERF2IP</label>
    </interactant>
    <organismsDiffer>false</organismsDiffer>
    <experiments>2</experiments>
</comment>
<comment type="subcellular location">
    <molecule>Isoform 1</molecule>
    <subcellularLocation>
        <location evidence="3">Cell membrane</location>
        <topology evidence="3">Peripheral membrane protein</topology>
        <orientation evidence="3">Cytoplasmic side</orientation>
    </subcellularLocation>
    <subcellularLocation>
        <location evidence="13">Nucleus</location>
    </subcellularLocation>
    <subcellularLocation>
        <location evidence="13">Cytoplasm</location>
    </subcellularLocation>
    <text evidence="3">Detected in the Schwann cell nucleus prior to the onset of myelination. Detected in Schwann cells at periaxonal myelin membranes. Associated with the cell membrane during myelination.</text>
</comment>
<comment type="subcellular location">
    <molecule>Isoform 2</molecule>
    <subcellularLocation>
        <location evidence="3">Cytoplasm</location>
    </subcellularLocation>
</comment>
<comment type="subcellular location">
    <subcellularLocation>
        <location evidence="3">Cell membrane</location>
    </subcellularLocation>
    <subcellularLocation>
        <location evidence="3">Cell junction</location>
    </subcellularLocation>
    <text evidence="3">Colocalizes with ACTB at tricellular junctions between eye lens fiber cells.</text>
</comment>
<comment type="alternative products">
    <event type="alternative splicing"/>
    <isoform>
        <id>Q9BXM0-1</id>
        <name>1</name>
        <name>L-periaxin</name>
        <sequence type="displayed"/>
    </isoform>
    <isoform>
        <id>Q9BXM0-2</id>
        <name>2</name>
        <name>S-periaxin</name>
        <sequence type="described" ref="VSP_004363 VSP_004364"/>
    </isoform>
    <isoform>
        <id>Q9BXM0-3</id>
        <name>3</name>
        <sequence type="described" ref="VSP_040352"/>
    </isoform>
</comment>
<comment type="tissue specificity">
    <text evidence="8 9">Detected in spinal cord (PubMed:11133365). Isoform 1 and isoform 2 are found in sciatic nerve and Schwann cells (PubMed:11157804).</text>
</comment>
<comment type="domain">
    <text evidence="17">Has a remarkable domain of repetitive pentameric units sometimes followed by a tripeptide spacer, it may separate two functional basic and acidic domains.</text>
</comment>
<comment type="domain">
    <text evidence="4">The Arg/Lys-rich basic domain functions as a tripartite nuclear localization signal.</text>
</comment>
<comment type="domain">
    <text evidence="3 13">The PDZ domain contains the signal for export from the nucleus (PubMed:24633211). The N-terminal region including the PDZ domain is required for the formation of Cajal bands on myelinated nerves.</text>
</comment>
<comment type="disease" evidence="8">
    <disease id="DI-00387">
        <name>Dejerine-Sottas syndrome</name>
        <acronym>DSS</acronym>
        <description>A severe degenerating neuropathy of the demyelinating Charcot-Marie-Tooth disease category, with onset by age 2 years. Characterized by motor and sensory neuropathy with very slow nerve conduction velocities, increased cerebrospinal fluid protein concentrations, hypertrophic nerve changes, delayed age of walking as well as areflexia. There are both autosomal dominant and autosomal recessive forms of Dejerine-Sottas syndrome.</description>
        <dbReference type="MIM" id="145900"/>
    </disease>
    <text>The disease is caused by variants affecting the gene represented in this entry.</text>
</comment>
<comment type="disease" evidence="11">
    <disease id="DI-03559">
        <name>Charcot-Marie-Tooth disease, demyelinating, type 4F</name>
        <acronym>CMT4F</acronym>
        <description>A recessive demyelinating form of Charcot-Marie-Tooth disease, a disorder of the peripheral nervous system, characterized by progressive weakness and atrophy, initially of the peroneal muscles and later of the distal muscles of the arms. Charcot-Marie-Tooth disease is classified in two main groups on the basis of electrophysiologic properties and histopathology: primary peripheral demyelinating neuropathies (designated CMT1 when they are dominantly inherited) and primary peripheral axonal neuropathies (CMT2). Demyelinating neuropathies are characterized by severely reduced nerve conduction velocities (less than 38 m/sec), segmental demyelination and remyelination with onion bulb formations on nerve biopsy, slowly progressive distal muscle atrophy and weakness, absent deep tendon reflexes, and hollow feet. By convention autosomal recessive forms of demyelinating Charcot-Marie-Tooth disease are designated CMT4. CMT4F is characterized by distal sensory impairment and distal muscle weakness and atrophy affecting the lower more than the upper limbs. The age at onset is variable and can range from childhood to adult years. When the onset is in infancy, the phenotype is characterized as Dejerine-Sottas syndrome.</description>
        <dbReference type="MIM" id="614895"/>
    </disease>
    <text>The disease is caused by variants affecting the gene represented in this entry.</text>
</comment>
<comment type="similarity">
    <text evidence="17">Belongs to the periaxin family.</text>
</comment>
<comment type="sequence caution" evidence="17">
    <conflict type="erroneous initiation">
        <sequence resource="EMBL-CDS" id="BAB13446"/>
    </conflict>
    <text>Extended N-terminus.</text>
</comment>
<comment type="sequence caution" evidence="17">
    <conflict type="miscellaneous discrepancy">
        <sequence resource="EMBL-CDS" id="BAB13446"/>
    </conflict>
    <text>Aberrant splicing.</text>
</comment>
<comment type="online information" name="Inherited peripheral neuropathies mutation db">
    <link uri="https://uantwerpen.vib.be/CMTMutations"/>
</comment>
<evidence type="ECO:0000250" key="1"/>
<evidence type="ECO:0000250" key="2">
    <source>
        <dbReference type="UniProtKB" id="E1BM58"/>
    </source>
</evidence>
<evidence type="ECO:0000250" key="3">
    <source>
        <dbReference type="UniProtKB" id="O55103"/>
    </source>
</evidence>
<evidence type="ECO:0000250" key="4">
    <source>
        <dbReference type="UniProtKB" id="Q63425"/>
    </source>
</evidence>
<evidence type="ECO:0000255" key="5">
    <source>
        <dbReference type="PROSITE-ProRule" id="PRU00143"/>
    </source>
</evidence>
<evidence type="ECO:0000256" key="6">
    <source>
        <dbReference type="SAM" id="MobiDB-lite"/>
    </source>
</evidence>
<evidence type="ECO:0000269" key="7">
    <source>
    </source>
</evidence>
<evidence type="ECO:0000269" key="8">
    <source>
    </source>
</evidence>
<evidence type="ECO:0000269" key="9">
    <source>
    </source>
</evidence>
<evidence type="ECO:0000269" key="10">
    <source>
    </source>
</evidence>
<evidence type="ECO:0000269" key="11">
    <source>
    </source>
</evidence>
<evidence type="ECO:0000269" key="12">
    <source>
    </source>
</evidence>
<evidence type="ECO:0000269" key="13">
    <source>
    </source>
</evidence>
<evidence type="ECO:0000269" key="14">
    <source>
    </source>
</evidence>
<evidence type="ECO:0000303" key="15">
    <source>
    </source>
</evidence>
<evidence type="ECO:0000303" key="16">
    <source>
    </source>
</evidence>
<evidence type="ECO:0000305" key="17"/>
<evidence type="ECO:0000305" key="18">
    <source>
    </source>
</evidence>
<evidence type="ECO:0007829" key="19">
    <source>
        <dbReference type="PDB" id="4CMZ"/>
    </source>
</evidence>
<reference key="1">
    <citation type="journal article" date="2001" name="Am. J. Hum. Genet.">
        <title>Periaxin mutations cause recessive Dejerine-Sottas neuropathy.</title>
        <authorList>
            <person name="Boerkoel C.F."/>
            <person name="Takashima H."/>
            <person name="Stankiewicz P."/>
            <person name="Garcia C.A."/>
            <person name="Leber S.M."/>
            <person name="Rhee-Morris L."/>
            <person name="Lupski J.R."/>
        </authorList>
    </citation>
    <scope>NUCLEOTIDE SEQUENCE [MRNA] (ISOFORMS 1 AND 2)</scope>
    <scope>TISSUE SPECIFICITY</scope>
    <scope>VARIANTS THR-406; GLN-495; ALA-882; MET-921; GLU-935; ARG-1083; ARG-1132; LYS-1259; GLU-1359 DEL AND CYS-1411</scope>
    <scope>INVOLVEMENT IN DSS</scope>
</reference>
<reference key="2">
    <citation type="journal article" date="2000" name="DNA Res.">
        <title>Prediction of the coding sequences of unidentified human genes. XVIII. The complete sequences of 100 new cDNA clones from brain which code for large proteins in vitro.</title>
        <authorList>
            <person name="Nagase T."/>
            <person name="Kikuno R."/>
            <person name="Nakayama M."/>
            <person name="Hirosawa M."/>
            <person name="Ohara O."/>
        </authorList>
    </citation>
    <scope>NUCLEOTIDE SEQUENCE [LARGE SCALE MRNA] (ISOFORM 3)</scope>
    <scope>VARIANT ALA-882</scope>
    <source>
        <tissue>Brain</tissue>
    </source>
</reference>
<reference key="3">
    <citation type="journal article" date="2004" name="Nature">
        <title>The DNA sequence and biology of human chromosome 19.</title>
        <authorList>
            <person name="Grimwood J."/>
            <person name="Gordon L.A."/>
            <person name="Olsen A.S."/>
            <person name="Terry A."/>
            <person name="Schmutz J."/>
            <person name="Lamerdin J.E."/>
            <person name="Hellsten U."/>
            <person name="Goodstein D."/>
            <person name="Couronne O."/>
            <person name="Tran-Gyamfi M."/>
            <person name="Aerts A."/>
            <person name="Altherr M."/>
            <person name="Ashworth L."/>
            <person name="Bajorek E."/>
            <person name="Black S."/>
            <person name="Branscomb E."/>
            <person name="Caenepeel S."/>
            <person name="Carrano A.V."/>
            <person name="Caoile C."/>
            <person name="Chan Y.M."/>
            <person name="Christensen M."/>
            <person name="Cleland C.A."/>
            <person name="Copeland A."/>
            <person name="Dalin E."/>
            <person name="Dehal P."/>
            <person name="Denys M."/>
            <person name="Detter J.C."/>
            <person name="Escobar J."/>
            <person name="Flowers D."/>
            <person name="Fotopulos D."/>
            <person name="Garcia C."/>
            <person name="Georgescu A.M."/>
            <person name="Glavina T."/>
            <person name="Gomez M."/>
            <person name="Gonzales E."/>
            <person name="Groza M."/>
            <person name="Hammon N."/>
            <person name="Hawkins T."/>
            <person name="Haydu L."/>
            <person name="Ho I."/>
            <person name="Huang W."/>
            <person name="Israni S."/>
            <person name="Jett J."/>
            <person name="Kadner K."/>
            <person name="Kimball H."/>
            <person name="Kobayashi A."/>
            <person name="Larionov V."/>
            <person name="Leem S.-H."/>
            <person name="Lopez F."/>
            <person name="Lou Y."/>
            <person name="Lowry S."/>
            <person name="Malfatti S."/>
            <person name="Martinez D."/>
            <person name="McCready P.M."/>
            <person name="Medina C."/>
            <person name="Morgan J."/>
            <person name="Nelson K."/>
            <person name="Nolan M."/>
            <person name="Ovcharenko I."/>
            <person name="Pitluck S."/>
            <person name="Pollard M."/>
            <person name="Popkie A.P."/>
            <person name="Predki P."/>
            <person name="Quan G."/>
            <person name="Ramirez L."/>
            <person name="Rash S."/>
            <person name="Retterer J."/>
            <person name="Rodriguez A."/>
            <person name="Rogers S."/>
            <person name="Salamov A."/>
            <person name="Salazar A."/>
            <person name="She X."/>
            <person name="Smith D."/>
            <person name="Slezak T."/>
            <person name="Solovyev V."/>
            <person name="Thayer N."/>
            <person name="Tice H."/>
            <person name="Tsai M."/>
            <person name="Ustaszewska A."/>
            <person name="Vo N."/>
            <person name="Wagner M."/>
            <person name="Wheeler J."/>
            <person name="Wu K."/>
            <person name="Xie G."/>
            <person name="Yang J."/>
            <person name="Dubchak I."/>
            <person name="Furey T.S."/>
            <person name="DeJong P."/>
            <person name="Dickson M."/>
            <person name="Gordon D."/>
            <person name="Eichler E.E."/>
            <person name="Pennacchio L.A."/>
            <person name="Richardson P."/>
            <person name="Stubbs L."/>
            <person name="Rokhsar D.S."/>
            <person name="Myers R.M."/>
            <person name="Rubin E.M."/>
            <person name="Lucas S.M."/>
        </authorList>
    </citation>
    <scope>NUCLEOTIDE SEQUENCE [LARGE SCALE GENOMIC DNA]</scope>
</reference>
<reference key="4">
    <citation type="journal article" date="2004" name="Genome Res.">
        <title>The status, quality, and expansion of the NIH full-length cDNA project: the Mammalian Gene Collection (MGC).</title>
        <authorList>
            <consortium name="The MGC Project Team"/>
        </authorList>
    </citation>
    <scope>NUCLEOTIDE SEQUENCE [LARGE SCALE MRNA] (ISOFORM 1)</scope>
    <scope>VARIANT ARG-1132</scope>
    <source>
        <tissue>PNS</tissue>
    </source>
</reference>
<reference key="5">
    <citation type="journal article" date="2001" name="Hum. Mol. Genet.">
        <title>A mutation in periaxin is responsible for CMT4F, an autosomal recessive form of Charcot-Marie-Tooth disease.</title>
        <authorList>
            <person name="Guilbot A."/>
            <person name="Williams A."/>
            <person name="Ravise N."/>
            <person name="Verny C."/>
            <person name="Brice A."/>
            <person name="Sherman D.L."/>
            <person name="Brophy P.J."/>
            <person name="LeGuern E."/>
            <person name="Delague V."/>
            <person name="Bareil C."/>
            <person name="Megarbane A."/>
            <person name="Claustres M."/>
        </authorList>
    </citation>
    <scope>DISEASE</scope>
    <scope>TISSUE SPECIFICITY</scope>
</reference>
<reference key="6">
    <citation type="journal article" date="2014" name="PLoS ONE">
        <title>Nuclear export of L-periaxin, mediated by its nuclear export signal in the PDZ domain.</title>
        <authorList>
            <person name="Shi Y."/>
            <person name="Zhang L."/>
            <person name="Yang T."/>
        </authorList>
    </citation>
    <scope>SUBCELLULAR LOCATION</scope>
    <scope>DOMAIN</scope>
    <scope>MUTAGENESIS OF 81-LEU--LEU-83</scope>
    <scope>NUCLEAR EXPORT SIGNAL</scope>
</reference>
<reference key="7">
    <citation type="journal article" date="2014" name="J. Biol. Chem.">
        <title>Periaxin and AHNAK nucleoprotein 2 form intertwined homodimers through domain swapping.</title>
        <authorList>
            <person name="Han H."/>
            <person name="Kursula P."/>
        </authorList>
    </citation>
    <scope>X-RAY CRYSTALLOGRAPHY (2.70 ANGSTROMS) OF 14-104</scope>
    <scope>SUBUNIT</scope>
</reference>
<reference key="8">
    <citation type="journal article" date="2012" name="Neurogenetics">
        <title>Late-onset Charcot-Marie-Tooth disease 4F caused by periaxin gene mutation.</title>
        <authorList>
            <person name="Tokunaga S."/>
            <person name="Hashiguchi A."/>
            <person name="Yoshimura A."/>
            <person name="Maeda K."/>
            <person name="Suzuki T."/>
            <person name="Haruki H."/>
            <person name="Nakamura T."/>
            <person name="Okamoto Y."/>
            <person name="Takashima H."/>
        </authorList>
    </citation>
    <scope>VARIANT CMT4F ASN-651</scope>
</reference>
<reference key="9">
    <citation type="journal article" date="2014" name="J. Neurol.">
        <title>Whole-exome sequencing in patients with inherited neuropathies: outcome and challenges.</title>
        <authorList>
            <person name="Schabhuettl M."/>
            <person name="Wieland T."/>
            <person name="Senderek J."/>
            <person name="Baets J."/>
            <person name="Timmerman V."/>
            <person name="De Jonghe P."/>
            <person name="Reilly M.M."/>
            <person name="Stieglbauer K."/>
            <person name="Laich E."/>
            <person name="Windhager R."/>
            <person name="Erwa W."/>
            <person name="Trajanoski S."/>
            <person name="Strom T.M."/>
            <person name="Auer-Grumbach M."/>
        </authorList>
    </citation>
    <scope>VARIANTS ALA-525 AND GLN-1335</scope>
</reference>
<protein>
    <recommendedName>
        <fullName>Periaxin</fullName>
    </recommendedName>
</protein>
<feature type="chain" id="PRO_0000058563" description="Periaxin">
    <location>
        <begin position="1"/>
        <end position="1461"/>
    </location>
</feature>
<feature type="domain" description="PDZ" evidence="5">
    <location>
        <begin position="16"/>
        <end position="99"/>
    </location>
</feature>
<feature type="repeat" description="1">
    <location>
        <begin position="431"/>
        <end position="435"/>
    </location>
</feature>
<feature type="repeat" description="2">
    <location>
        <begin position="439"/>
        <end position="443"/>
    </location>
</feature>
<feature type="repeat" description="3">
    <location>
        <begin position="447"/>
        <end position="451"/>
    </location>
</feature>
<feature type="repeat" description="4">
    <location>
        <begin position="455"/>
        <end position="459"/>
    </location>
</feature>
<feature type="repeat" description="5">
    <location>
        <begin position="463"/>
        <end position="467"/>
    </location>
</feature>
<feature type="repeat" description="6">
    <location>
        <begin position="468"/>
        <end position="472"/>
    </location>
</feature>
<feature type="repeat" description="7">
    <location>
        <begin position="473"/>
        <end position="477"/>
    </location>
</feature>
<feature type="repeat" description="8">
    <location>
        <begin position="481"/>
        <end position="485"/>
    </location>
</feature>
<feature type="repeat" description="9">
    <location>
        <begin position="486"/>
        <end position="490"/>
    </location>
</feature>
<feature type="repeat" description="10">
    <location>
        <begin position="494"/>
        <end position="498"/>
    </location>
</feature>
<feature type="repeat" description="11">
    <location>
        <begin position="499"/>
        <end position="503"/>
    </location>
</feature>
<feature type="repeat" description="12">
    <location>
        <begin position="507"/>
        <end position="511"/>
    </location>
</feature>
<feature type="repeat" description="13">
    <location>
        <begin position="512"/>
        <end position="516"/>
    </location>
</feature>
<feature type="repeat" description="14">
    <location>
        <begin position="520"/>
        <end position="524"/>
    </location>
</feature>
<feature type="repeat" description="15">
    <location>
        <begin position="525"/>
        <end position="529"/>
    </location>
</feature>
<feature type="repeat" description="16">
    <location>
        <begin position="533"/>
        <end position="537"/>
    </location>
</feature>
<feature type="repeat" description="17">
    <location>
        <begin position="538"/>
        <end position="542"/>
    </location>
</feature>
<feature type="repeat" description="18">
    <location>
        <begin position="546"/>
        <end position="550"/>
    </location>
</feature>
<feature type="repeat" description="19">
    <location>
        <begin position="551"/>
        <end position="555"/>
    </location>
</feature>
<feature type="repeat" description="20">
    <location>
        <begin position="559"/>
        <end position="563"/>
    </location>
</feature>
<feature type="repeat" description="21">
    <location>
        <begin position="564"/>
        <end position="568"/>
    </location>
</feature>
<feature type="repeat" description="22">
    <location>
        <begin position="572"/>
        <end position="576"/>
    </location>
</feature>
<feature type="repeat" description="23">
    <location>
        <begin position="577"/>
        <end position="581"/>
    </location>
</feature>
<feature type="repeat" description="24">
    <location>
        <begin position="582"/>
        <end position="586"/>
    </location>
</feature>
<feature type="repeat" description="25">
    <location>
        <begin position="590"/>
        <end position="594"/>
    </location>
</feature>
<feature type="repeat" description="26">
    <location>
        <begin position="595"/>
        <end position="599"/>
    </location>
</feature>
<feature type="repeat" description="27">
    <location>
        <begin position="600"/>
        <end position="604"/>
    </location>
</feature>
<feature type="repeat" description="28">
    <location>
        <begin position="608"/>
        <end position="612"/>
    </location>
</feature>
<feature type="repeat" description="29">
    <location>
        <begin position="613"/>
        <end position="617"/>
    </location>
</feature>
<feature type="repeat" description="30">
    <location>
        <begin position="618"/>
        <end position="622"/>
    </location>
</feature>
<feature type="repeat" description="31">
    <location>
        <begin position="626"/>
        <end position="630"/>
    </location>
</feature>
<feature type="repeat" description="32">
    <location>
        <begin position="631"/>
        <end position="635"/>
    </location>
</feature>
<feature type="repeat" description="33">
    <location>
        <begin position="636"/>
        <end position="640"/>
    </location>
</feature>
<feature type="repeat" description="34">
    <location>
        <begin position="644"/>
        <end position="648"/>
    </location>
</feature>
<feature type="repeat" description="35">
    <location>
        <begin position="649"/>
        <end position="653"/>
    </location>
</feature>
<feature type="repeat" description="36">
    <location>
        <begin position="654"/>
        <end position="658"/>
    </location>
</feature>
<feature type="repeat" description="37">
    <location>
        <begin position="662"/>
        <end position="666"/>
    </location>
</feature>
<feature type="repeat" description="38">
    <location>
        <begin position="670"/>
        <end position="674"/>
    </location>
</feature>
<feature type="repeat" description="39">
    <location>
        <begin position="675"/>
        <end position="679"/>
    </location>
</feature>
<feature type="repeat" description="40">
    <location>
        <begin position="683"/>
        <end position="687"/>
    </location>
</feature>
<feature type="repeat" description="41">
    <location>
        <begin position="688"/>
        <end position="692"/>
    </location>
</feature>
<feature type="repeat" description="42">
    <location>
        <begin position="696"/>
        <end position="700"/>
    </location>
</feature>
<feature type="repeat" description="43">
    <location>
        <begin position="701"/>
        <end position="705"/>
    </location>
</feature>
<feature type="repeat" description="44">
    <location>
        <begin position="706"/>
        <end position="710"/>
    </location>
</feature>
<feature type="repeat" description="45">
    <location>
        <begin position="714"/>
        <end position="718"/>
    </location>
</feature>
<feature type="repeat" description="46">
    <location>
        <begin position="719"/>
        <end position="723"/>
    </location>
</feature>
<feature type="repeat" description="47">
    <location>
        <begin position="724"/>
        <end position="728"/>
    </location>
</feature>
<feature type="repeat" description="48">
    <location>
        <begin position="732"/>
        <end position="736"/>
    </location>
</feature>
<feature type="repeat" description="49">
    <location>
        <begin position="737"/>
        <end position="741"/>
    </location>
</feature>
<feature type="repeat" description="50">
    <location>
        <begin position="742"/>
        <end position="746"/>
    </location>
</feature>
<feature type="repeat" description="51">
    <location>
        <begin position="750"/>
        <end position="754"/>
    </location>
</feature>
<feature type="repeat" description="52">
    <location>
        <begin position="755"/>
        <end position="759"/>
    </location>
</feature>
<feature type="repeat" description="53">
    <location>
        <begin position="760"/>
        <end position="764"/>
    </location>
</feature>
<feature type="repeat" description="54">
    <location>
        <begin position="771"/>
        <end position="775"/>
    </location>
</feature>
<feature type="repeat" description="55">
    <location>
        <begin position="779"/>
        <end position="783"/>
    </location>
</feature>
<feature type="region of interest" description="55 X 5 AA approximate tandem repeats of [LVMAG]-[PSREQC]-[EDKL]-[LIVMAP]-[AQKHRPE]; that may have a tripeptide spacer of [LV]-P-[KER]">
    <location>
        <begin position="431"/>
        <end position="783"/>
    </location>
</feature>
<feature type="region of interest" description="Disordered" evidence="6">
    <location>
        <begin position="1318"/>
        <end position="1461"/>
    </location>
</feature>
<feature type="short sequence motif" description="Nuclear export signal" evidence="18">
    <location>
        <begin position="70"/>
        <end position="84"/>
    </location>
</feature>
<feature type="short sequence motif" description="Nuclear localization signal" evidence="1">
    <location>
        <begin position="118"/>
        <end position="196"/>
    </location>
</feature>
<feature type="compositionally biased region" description="Basic and acidic residues" evidence="6">
    <location>
        <begin position="1318"/>
        <end position="1327"/>
    </location>
</feature>
<feature type="compositionally biased region" description="Acidic residues" evidence="6">
    <location>
        <begin position="1352"/>
        <end position="1363"/>
    </location>
</feature>
<feature type="modified residue" description="Phosphoserine" evidence="4">
    <location>
        <position position="7"/>
    </location>
</feature>
<feature type="modified residue" description="Phosphoserine" evidence="4">
    <location>
        <position position="133"/>
    </location>
</feature>
<feature type="modified residue" description="Phosphoserine" evidence="4">
    <location>
        <position position="900"/>
    </location>
</feature>
<feature type="modified residue" description="Phosphoserine" evidence="4">
    <location>
        <position position="1082"/>
    </location>
</feature>
<feature type="modified residue" description="Phosphoserine" evidence="3">
    <location>
        <position position="1349"/>
    </location>
</feature>
<feature type="modified residue" description="Phosphoserine" evidence="3">
    <location>
        <position position="1351"/>
    </location>
</feature>
<feature type="modified residue" description="Phosphoserine" evidence="3">
    <location>
        <position position="1363"/>
    </location>
</feature>
<feature type="modified residue" description="Phosphoserine" evidence="4">
    <location>
        <position position="1401"/>
    </location>
</feature>
<feature type="modified residue" description="Phosphoserine" evidence="3">
    <location>
        <position position="1407"/>
    </location>
</feature>
<feature type="modified residue" description="Phosphoserine" evidence="3">
    <location>
        <position position="1439"/>
    </location>
</feature>
<feature type="splice variant" id="VSP_040352" description="In isoform 3." evidence="15">
    <location>
        <begin position="1"/>
        <end position="139"/>
    </location>
</feature>
<feature type="splice variant" id="VSP_004363" description="In isoform 2." evidence="16">
    <original>NIQSLSPVKKKKMVPGALGV</original>
    <variation>VRVLSPAPALDCPSDPVSAP</variation>
    <location>
        <begin position="128"/>
        <end position="147"/>
    </location>
</feature>
<feature type="splice variant" id="VSP_004364" description="In isoform 2." evidence="16">
    <location>
        <begin position="148"/>
        <end position="1461"/>
    </location>
</feature>
<feature type="sequence variant" id="VAR_013056" description="In dbSNP:rs117336941." evidence="8">
    <original>A</original>
    <variation>T</variation>
    <location>
        <position position="406"/>
    </location>
</feature>
<feature type="sequence variant" id="VAR_013057" description="In dbSNP:rs146789340." evidence="8">
    <original>E</original>
    <variation>Q</variation>
    <location>
        <position position="495"/>
    </location>
</feature>
<feature type="sequence variant" id="VAR_073295" description="In dbSNP:rs149715830." evidence="12">
    <original>V</original>
    <variation>A</variation>
    <location>
        <position position="525"/>
    </location>
</feature>
<feature type="sequence variant" id="VAR_069093" description="In CMT4F; dbSNP:rs3814290." evidence="11">
    <original>D</original>
    <variation>N</variation>
    <location>
        <position position="651"/>
    </location>
</feature>
<feature type="sequence variant" id="VAR_013058" description="In dbSNP:rs268671." evidence="7 8">
    <original>V</original>
    <variation>A</variation>
    <location>
        <position position="882"/>
    </location>
</feature>
<feature type="sequence variant" id="VAR_013059" description="In dbSNP:rs268673." evidence="8">
    <original>I</original>
    <variation>M</variation>
    <location>
        <position position="921"/>
    </location>
</feature>
<feature type="sequence variant" id="VAR_013060" evidence="8">
    <original>K</original>
    <variation>E</variation>
    <location>
        <position position="935"/>
    </location>
</feature>
<feature type="sequence variant" id="VAR_013061" description="In dbSNP:rs3745202." evidence="8">
    <original>P</original>
    <variation>R</variation>
    <location>
        <position position="1083"/>
    </location>
</feature>
<feature type="sequence variant" id="VAR_013062" description="In dbSNP:rs268674." evidence="8 10">
    <original>G</original>
    <variation>R</variation>
    <location>
        <position position="1132"/>
    </location>
</feature>
<feature type="sequence variant" id="VAR_013063" description="In dbSNP:rs751742049." evidence="8">
    <original>E</original>
    <variation>K</variation>
    <location>
        <position position="1259"/>
    </location>
</feature>
<feature type="sequence variant" id="VAR_073296" description="Found in a patient with a complex hereditary motor and sensory neuropathy with dysarthria, joints hypermobility and cerebellar signs; uncertain significance; dbSNP:rs1384489319." evidence="12">
    <original>R</original>
    <variation>Q</variation>
    <location>
        <position position="1335"/>
    </location>
</feature>
<feature type="sequence variant" id="VAR_013064" evidence="8">
    <location>
        <position position="1359"/>
    </location>
</feature>
<feature type="sequence variant" id="VAR_013065" description="In dbSNP:rs533966999." evidence="8">
    <original>R</original>
    <variation>C</variation>
    <location>
        <position position="1411"/>
    </location>
</feature>
<feature type="mutagenesis site" description="Nearly abolishes export from the nucleus." evidence="13">
    <original>LRL</original>
    <variation>QRQ</variation>
    <location>
        <begin position="81"/>
        <end position="83"/>
    </location>
</feature>
<feature type="strand" evidence="19">
    <location>
        <begin position="18"/>
        <end position="22"/>
    </location>
</feature>
<feature type="strand" evidence="19">
    <location>
        <begin position="26"/>
        <end position="28"/>
    </location>
</feature>
<feature type="strand" evidence="19">
    <location>
        <begin position="32"/>
        <end position="38"/>
    </location>
</feature>
<feature type="strand" evidence="19">
    <location>
        <begin position="41"/>
        <end position="47"/>
    </location>
</feature>
<feature type="helix" evidence="19">
    <location>
        <begin position="52"/>
        <end position="56"/>
    </location>
</feature>
<feature type="strand" evidence="19">
    <location>
        <begin position="64"/>
        <end position="71"/>
    </location>
</feature>
<feature type="helix" evidence="19">
    <location>
        <begin position="77"/>
        <end position="87"/>
    </location>
</feature>
<feature type="strand" evidence="19">
    <location>
        <begin position="90"/>
        <end position="99"/>
    </location>
</feature>
<proteinExistence type="evidence at protein level"/>
<sequence>MEARSRSAEELRRAELVEIIVETEAQTGVSGINVAGGGKEGIFVRELREDSPAARSLSLQEGDQLLSARVFFENFKYEDALRLLQCAEPYKVSFCLKRTVPTGDLALRPGTVSGYEIKGPRAKVAKLNIQSLSPVKKKKMVPGALGVPADLAPVDVEFSFPKFSRLRRGLKAEAVKGPVPAAPARRRLQLPRLRVREVAEEAQAARLAAAAPPPRKAKVEAEVAAGARFTAPQVELVGPRLPGAEVGVPQVSAPKAAPSAEAAGGFALHLPTLGLGAPAPPAVEAPAVGIQVPQVELPALPSLPTLPTLPCLETREGAVSVVVPTLDVAAPTVGVDLALPGAEVEARGEAPEVALKMPRLSFPRFGARAKEVAEAKVAKVSPEARVKGPRLRMPTFGLSLLEPRPAAPEVVESKLKLPTIKMPSLGIGVSGPEVKVPKGPEVKLPKAPEVKLPKVPEAALPEVRLPEVELPKVSEMKLPKVPEMAVPEVRLPEVELPKVSEMKLPKVPEMAVPEVRLPEVQLLKVSEMKLPKVPEMAVPEVRLPEVQLPKVSEMKLPEVSEVAVPEVRLPEVQLPKVPEMKVPEMKLPKVPEMKLPEMKLPEVQLPKVPEMAVPDVHLPEVQLPKVPEMKLPEMKLPEVKLPKVPEMAVPDVHLPEVQLPKVPEMKLPKMPEMAVPEVRLPEVQLPKVSEMKLPKVPEMAVPDVHLPEVQLPKVCEMKVPDMKLPEIKLPKVPEMAVPDVHLPEVQLPKVSEIRLPEMQVPKVPDVHLPKAPEVKLPRAPEVQLKATKAEQAEGMEFGFKMPKMTMPKLGRAESPSRGKPGEAGAEVSGKLVTLPCLQPEVDGEAHVGVPSLTLPSVELDLPGALGLQGQVPAAKMGKGERVEGPEVAAGVREVGFRVPSVEIVTPQLPAVEIEEGRLEMIETKVKPSSKFSLPKFGLSGPKVAKAEAEGAGRATKLKVSKFAISLPKARVGAEAEAKGAGEAGLLPALDLSIPQLSLDAHLPSGKVEVAGADLKFKGPRFALPKFGVRGRDTEAAELVPGVAELEGKGWGWDGRVKMPKLKMPSFGLARGKEAEVQGDRASPGEKAESTAVQLKIPEVELVTLGAQEEGRAEGAVAVSGMQLSGLKVSTAGQVVTEGHDAGLRMPPLGISLPQVELTGFGEAGTPGQQAQSTVPSAEGTAGYRVQVPQVTLSLPGAQVAGGELLVGEGVFKMPTVTVPQLELDVGLSREAQAGEAATGEGGLRLKLPTLGARARVGGEGAEEQPPGAERTFCLSLPDVELSPSGGNHAEYQVAEGEGEAGHKLKVRLPRFGLVRAKEGAEEGEKAKSPKLRLPRVGFSQSEMVTGEGSPSPEEEEEEEEEGSGEGASGRRGRVRVRLPRVGLAAPSKASRGQEGDAAPKSPVREKSPKFRFPRVSLSPKARSGSGDQEEGGLRVRLPSVGFSETGAPGPARMEGAQAAAV</sequence>
<keyword id="KW-0002">3D-structure</keyword>
<keyword id="KW-0025">Alternative splicing</keyword>
<keyword id="KW-0965">Cell junction</keyword>
<keyword id="KW-1003">Cell membrane</keyword>
<keyword id="KW-0144">Charcot-Marie-Tooth disease</keyword>
<keyword id="KW-0963">Cytoplasm</keyword>
<keyword id="KW-0213">Dejerine-Sottas syndrome</keyword>
<keyword id="KW-0225">Disease variant</keyword>
<keyword id="KW-0472">Membrane</keyword>
<keyword id="KW-0523">Neurodegeneration</keyword>
<keyword id="KW-0622">Neuropathy</keyword>
<keyword id="KW-0539">Nucleus</keyword>
<keyword id="KW-0597">Phosphoprotein</keyword>
<keyword id="KW-1267">Proteomics identification</keyword>
<keyword id="KW-1185">Reference proteome</keyword>
<keyword id="KW-0677">Repeat</keyword>
<gene>
    <name type="primary">PRX</name>
    <name type="synonym">KIAA1620</name>
</gene>
<organism>
    <name type="scientific">Homo sapiens</name>
    <name type="common">Human</name>
    <dbReference type="NCBI Taxonomy" id="9606"/>
    <lineage>
        <taxon>Eukaryota</taxon>
        <taxon>Metazoa</taxon>
        <taxon>Chordata</taxon>
        <taxon>Craniata</taxon>
        <taxon>Vertebrata</taxon>
        <taxon>Euteleostomi</taxon>
        <taxon>Mammalia</taxon>
        <taxon>Eutheria</taxon>
        <taxon>Euarchontoglires</taxon>
        <taxon>Primates</taxon>
        <taxon>Haplorrhini</taxon>
        <taxon>Catarrhini</taxon>
        <taxon>Hominidae</taxon>
        <taxon>Homo</taxon>
    </lineage>
</organism>
<accession>Q9BXM0</accession>
<accession>Q9BXL9</accession>
<accession>Q9HCF2</accession>
<name>PRAX_HUMAN</name>
<dbReference type="EMBL" id="AF321191">
    <property type="protein sequence ID" value="AAK19279.1"/>
    <property type="molecule type" value="mRNA"/>
</dbReference>
<dbReference type="EMBL" id="AF321192">
    <property type="protein sequence ID" value="AAK19280.1"/>
    <property type="molecule type" value="mRNA"/>
</dbReference>
<dbReference type="EMBL" id="AB046840">
    <property type="protein sequence ID" value="BAB13446.1"/>
    <property type="status" value="ALT_SEQ"/>
    <property type="molecule type" value="mRNA"/>
</dbReference>
<dbReference type="EMBL" id="AC010271">
    <property type="status" value="NOT_ANNOTATED_CDS"/>
    <property type="molecule type" value="Genomic_DNA"/>
</dbReference>
<dbReference type="EMBL" id="BC067266">
    <property type="protein sequence ID" value="AAH67266.1"/>
    <property type="molecule type" value="mRNA"/>
</dbReference>
<dbReference type="CCDS" id="CCDS12556.1">
    <molecule id="Q9BXM0-2"/>
</dbReference>
<dbReference type="CCDS" id="CCDS33028.1">
    <molecule id="Q9BXM0-1"/>
</dbReference>
<dbReference type="RefSeq" id="NP_066007.1">
    <molecule id="Q9BXM0-2"/>
    <property type="nucleotide sequence ID" value="NM_020956.2"/>
</dbReference>
<dbReference type="RefSeq" id="NP_870998.2">
    <molecule id="Q9BXM0-1"/>
    <property type="nucleotide sequence ID" value="NM_181882.3"/>
</dbReference>
<dbReference type="RefSeq" id="XP_011525473.1">
    <property type="nucleotide sequence ID" value="XM_011527171.2"/>
</dbReference>
<dbReference type="PDB" id="4CMZ">
    <property type="method" value="X-ray"/>
    <property type="resolution" value="2.70 A"/>
    <property type="chains" value="A/B/C=14-104"/>
</dbReference>
<dbReference type="PDBsum" id="4CMZ"/>
<dbReference type="SMR" id="Q9BXM0"/>
<dbReference type="BioGRID" id="121739">
    <property type="interactions" value="17"/>
</dbReference>
<dbReference type="FunCoup" id="Q9BXM0">
    <property type="interactions" value="217"/>
</dbReference>
<dbReference type="IntAct" id="Q9BXM0">
    <property type="interactions" value="11"/>
</dbReference>
<dbReference type="STRING" id="9606.ENSP00000326018"/>
<dbReference type="GlyGen" id="Q9BXM0">
    <property type="glycosylation" value="1 site"/>
</dbReference>
<dbReference type="iPTMnet" id="Q9BXM0"/>
<dbReference type="PhosphoSitePlus" id="Q9BXM0"/>
<dbReference type="BioMuta" id="PRX"/>
<dbReference type="DMDM" id="317373270"/>
<dbReference type="jPOST" id="Q9BXM0"/>
<dbReference type="MassIVE" id="Q9BXM0"/>
<dbReference type="PaxDb" id="9606-ENSP00000326018"/>
<dbReference type="PeptideAtlas" id="Q9BXM0"/>
<dbReference type="ProteomicsDB" id="79452">
    <molecule id="Q9BXM0-1"/>
</dbReference>
<dbReference type="ProteomicsDB" id="79453">
    <molecule id="Q9BXM0-2"/>
</dbReference>
<dbReference type="ProteomicsDB" id="79454">
    <molecule id="Q9BXM0-3"/>
</dbReference>
<dbReference type="Antibodypedia" id="959">
    <property type="antibodies" value="72 antibodies from 17 providers"/>
</dbReference>
<dbReference type="DNASU" id="57716"/>
<dbReference type="Ensembl" id="ENST00000291825.11">
    <molecule id="Q9BXM0-2"/>
    <property type="protein sequence ID" value="ENSP00000291825.6"/>
    <property type="gene ID" value="ENSG00000105227.16"/>
</dbReference>
<dbReference type="Ensembl" id="ENST00000324001.8">
    <molecule id="Q9BXM0-1"/>
    <property type="protein sequence ID" value="ENSP00000326018.6"/>
    <property type="gene ID" value="ENSG00000105227.16"/>
</dbReference>
<dbReference type="Ensembl" id="ENST00000673881.1">
    <molecule id="Q9BXM0-3"/>
    <property type="protein sequence ID" value="ENSP00000501070.1"/>
    <property type="gene ID" value="ENSG00000105227.16"/>
</dbReference>
<dbReference type="Ensembl" id="ENST00000674773.1">
    <molecule id="Q9BXM0-3"/>
    <property type="protein sequence ID" value="ENSP00000502579.1"/>
    <property type="gene ID" value="ENSG00000105227.16"/>
</dbReference>
<dbReference type="GeneID" id="57716"/>
<dbReference type="KEGG" id="hsa:57716"/>
<dbReference type="MANE-Select" id="ENST00000324001.8">
    <property type="protein sequence ID" value="ENSP00000326018.6"/>
    <property type="RefSeq nucleotide sequence ID" value="NM_181882.3"/>
    <property type="RefSeq protein sequence ID" value="NP_870998.2"/>
</dbReference>
<dbReference type="UCSC" id="uc002onr.4">
    <molecule id="Q9BXM0-1"/>
    <property type="organism name" value="human"/>
</dbReference>
<dbReference type="AGR" id="HGNC:13797"/>
<dbReference type="CTD" id="57716"/>
<dbReference type="DisGeNET" id="57716"/>
<dbReference type="GeneCards" id="PRX"/>
<dbReference type="GeneReviews" id="PRX"/>
<dbReference type="HGNC" id="HGNC:13797">
    <property type="gene designation" value="PRX"/>
</dbReference>
<dbReference type="HPA" id="ENSG00000105227">
    <property type="expression patterns" value="Tissue enhanced (lung)"/>
</dbReference>
<dbReference type="MalaCards" id="PRX"/>
<dbReference type="MIM" id="145900">
    <property type="type" value="phenotype"/>
</dbReference>
<dbReference type="MIM" id="605725">
    <property type="type" value="gene"/>
</dbReference>
<dbReference type="MIM" id="614895">
    <property type="type" value="phenotype"/>
</dbReference>
<dbReference type="neXtProt" id="NX_Q9BXM0"/>
<dbReference type="OpenTargets" id="ENSG00000105227"/>
<dbReference type="Orphanet" id="99952">
    <property type="disease" value="Charcot-Marie-Tooth disease type 4F"/>
</dbReference>
<dbReference type="Orphanet" id="64748">
    <property type="disease" value="Dejerine-Sottas syndrome"/>
</dbReference>
<dbReference type="PharmGKB" id="PA33843"/>
<dbReference type="VEuPathDB" id="HostDB:ENSG00000105227"/>
<dbReference type="eggNOG" id="ENOG502QS7Y">
    <property type="taxonomic scope" value="Eukaryota"/>
</dbReference>
<dbReference type="GeneTree" id="ENSGT00940000160366"/>
<dbReference type="HOGENOM" id="CLU_1758219_0_0_1"/>
<dbReference type="InParanoid" id="Q9BXM0"/>
<dbReference type="OMA" id="EMKLPRM"/>
<dbReference type="OrthoDB" id="447516at2759"/>
<dbReference type="PAN-GO" id="Q9BXM0">
    <property type="GO annotations" value="4 GO annotations based on evolutionary models"/>
</dbReference>
<dbReference type="PhylomeDB" id="Q9BXM0"/>
<dbReference type="TreeFam" id="TF350595"/>
<dbReference type="PathwayCommons" id="Q9BXM0"/>
<dbReference type="Reactome" id="R-HSA-9619665">
    <molecule id="Q9BXM0-1"/>
    <property type="pathway name" value="EGR2 and SOX10-mediated initiation of Schwann cell myelination"/>
</dbReference>
<dbReference type="SignaLink" id="Q9BXM0"/>
<dbReference type="BioGRID-ORCS" id="57716">
    <property type="hits" value="16 hits in 1160 CRISPR screens"/>
</dbReference>
<dbReference type="ChiTaRS" id="PRX">
    <property type="organism name" value="human"/>
</dbReference>
<dbReference type="EvolutionaryTrace" id="Q9BXM0"/>
<dbReference type="GeneWiki" id="PRX_(gene)"/>
<dbReference type="GenomeRNAi" id="57716"/>
<dbReference type="Pharos" id="Q9BXM0">
    <property type="development level" value="Tbio"/>
</dbReference>
<dbReference type="PRO" id="PR:Q9BXM0"/>
<dbReference type="Proteomes" id="UP000005640">
    <property type="component" value="Chromosome 19"/>
</dbReference>
<dbReference type="RNAct" id="Q9BXM0">
    <property type="molecule type" value="protein"/>
</dbReference>
<dbReference type="Bgee" id="ENSG00000105227">
    <property type="expression patterns" value="Expressed in olfactory bulb and 182 other cell types or tissues"/>
</dbReference>
<dbReference type="ExpressionAtlas" id="Q9BXM0">
    <property type="expression patterns" value="baseline and differential"/>
</dbReference>
<dbReference type="GO" id="GO:0070161">
    <property type="term" value="C:anchoring junction"/>
    <property type="evidence" value="ECO:0007669"/>
    <property type="project" value="UniProtKB-SubCell"/>
</dbReference>
<dbReference type="GO" id="GO:0005737">
    <property type="term" value="C:cytoplasm"/>
    <property type="evidence" value="ECO:0000314"/>
    <property type="project" value="UniProtKB"/>
</dbReference>
<dbReference type="GO" id="GO:0005634">
    <property type="term" value="C:nucleus"/>
    <property type="evidence" value="ECO:0000314"/>
    <property type="project" value="UniProtKB"/>
</dbReference>
<dbReference type="GO" id="GO:0005886">
    <property type="term" value="C:plasma membrane"/>
    <property type="evidence" value="ECO:0000304"/>
    <property type="project" value="Reactome"/>
</dbReference>
<dbReference type="GO" id="GO:0008366">
    <property type="term" value="P:axon ensheathment"/>
    <property type="evidence" value="ECO:0000303"/>
    <property type="project" value="UniProtKB"/>
</dbReference>
<dbReference type="GO" id="GO:0032287">
    <property type="term" value="P:peripheral nervous system myelin maintenance"/>
    <property type="evidence" value="ECO:0000318"/>
    <property type="project" value="GO_Central"/>
</dbReference>
<dbReference type="GO" id="GO:0043484">
    <property type="term" value="P:regulation of RNA splicing"/>
    <property type="evidence" value="ECO:0000318"/>
    <property type="project" value="GO_Central"/>
</dbReference>
<dbReference type="CDD" id="cd00136">
    <property type="entry name" value="PDZ_canonical"/>
    <property type="match status" value="1"/>
</dbReference>
<dbReference type="FunFam" id="2.30.42.10:FF:000149">
    <property type="entry name" value="Periaxin"/>
    <property type="match status" value="1"/>
</dbReference>
<dbReference type="Gene3D" id="2.30.42.10">
    <property type="match status" value="1"/>
</dbReference>
<dbReference type="InterPro" id="IPR052082">
    <property type="entry name" value="Myelin_sheath_structural"/>
</dbReference>
<dbReference type="InterPro" id="IPR001478">
    <property type="entry name" value="PDZ"/>
</dbReference>
<dbReference type="InterPro" id="IPR036034">
    <property type="entry name" value="PDZ_sf"/>
</dbReference>
<dbReference type="PANTHER" id="PTHR23348:SF42">
    <property type="entry name" value="PERIAXIN"/>
    <property type="match status" value="1"/>
</dbReference>
<dbReference type="PANTHER" id="PTHR23348">
    <property type="entry name" value="PERIAXIN/AHNAK"/>
    <property type="match status" value="1"/>
</dbReference>
<dbReference type="SMART" id="SM00228">
    <property type="entry name" value="PDZ"/>
    <property type="match status" value="1"/>
</dbReference>
<dbReference type="SUPFAM" id="SSF50156">
    <property type="entry name" value="PDZ domain-like"/>
    <property type="match status" value="1"/>
</dbReference>
<dbReference type="PROSITE" id="PS50106">
    <property type="entry name" value="PDZ"/>
    <property type="match status" value="1"/>
</dbReference>